<name>Y2569_STAAS</name>
<sequence length="570" mass="64187">MTEPIISFKDFSFQYHSQATPTLQKINVDIYPGEKVLVVGASGSGKSTFANCINGLIPFKTKGNITGELYINNQDATVSCLHDRSNVVGTVLQDTDGQFIGLTAAEDMAFLLENNCVEQDDMKKNVSYWAEKVGMIEHLNHRPQDLSGGQKQRVSLGGILIHRTPILILDEPLANLDPATGHETLRLLNNIHEETKSTMIIVEHRLEESLDDTFDRVLLFKDGKIIANTTPSDLLKSSKLKEAGIREPLYCTALKYAEVDVESIDNLANLRDVCMSEHVKFKVKKWIDETSANNDNKYKSEPLLELNEVCVQYSDYSNSVLNNVQLNVYRREMLSIVGHNGAGKSTLAKAICGFLDITGNIQFCNRGFNQLSISERSEFVGYVMQNPNHMISEKMIYDEVALGLRARGMKESDIKIRVENVLKICGLYAFRNWPIVALSYGQKKRVTIASVLVLNPEIIILDEPTAGQDFYHYNEIMSFLIELNRQGKTIIMITHDMHLLSEYSSRTVVLSKGQVVADTTPVLVLNDKKICEIASLRQTSLFEMAEYIGISEPQKLVQLFINHDRKVRRQ</sequence>
<dbReference type="EC" id="7.-.-.-"/>
<dbReference type="EMBL" id="BX571857">
    <property type="protein sequence ID" value="CAG44386.1"/>
    <property type="molecule type" value="Genomic_DNA"/>
</dbReference>
<dbReference type="RefSeq" id="WP_000138645.1">
    <property type="nucleotide sequence ID" value="NC_002953.3"/>
</dbReference>
<dbReference type="SMR" id="Q6G5Z1"/>
<dbReference type="KEGG" id="sas:SAS2569"/>
<dbReference type="HOGENOM" id="CLU_000604_86_7_9"/>
<dbReference type="GO" id="GO:0043190">
    <property type="term" value="C:ATP-binding cassette (ABC) transporter complex"/>
    <property type="evidence" value="ECO:0007669"/>
    <property type="project" value="TreeGrafter"/>
</dbReference>
<dbReference type="GO" id="GO:0005524">
    <property type="term" value="F:ATP binding"/>
    <property type="evidence" value="ECO:0007669"/>
    <property type="project" value="UniProtKB-KW"/>
</dbReference>
<dbReference type="GO" id="GO:0016887">
    <property type="term" value="F:ATP hydrolysis activity"/>
    <property type="evidence" value="ECO:0007669"/>
    <property type="project" value="InterPro"/>
</dbReference>
<dbReference type="GO" id="GO:0042626">
    <property type="term" value="F:ATPase-coupled transmembrane transporter activity"/>
    <property type="evidence" value="ECO:0007669"/>
    <property type="project" value="TreeGrafter"/>
</dbReference>
<dbReference type="CDD" id="cd03225">
    <property type="entry name" value="ABC_cobalt_CbiO_domain1"/>
    <property type="match status" value="2"/>
</dbReference>
<dbReference type="FunFam" id="3.40.50.300:FF:001422">
    <property type="entry name" value="Cobalt ABC transporter ATP-binding protein"/>
    <property type="match status" value="1"/>
</dbReference>
<dbReference type="FunFam" id="3.40.50.300:FF:000224">
    <property type="entry name" value="Energy-coupling factor transporter ATP-binding protein EcfA"/>
    <property type="match status" value="1"/>
</dbReference>
<dbReference type="Gene3D" id="3.40.50.300">
    <property type="entry name" value="P-loop containing nucleotide triphosphate hydrolases"/>
    <property type="match status" value="2"/>
</dbReference>
<dbReference type="InterPro" id="IPR003593">
    <property type="entry name" value="AAA+_ATPase"/>
</dbReference>
<dbReference type="InterPro" id="IPR022216">
    <property type="entry name" value="ABC_Co_transporter"/>
</dbReference>
<dbReference type="InterPro" id="IPR003439">
    <property type="entry name" value="ABC_transporter-like_ATP-bd"/>
</dbReference>
<dbReference type="InterPro" id="IPR017871">
    <property type="entry name" value="ABC_transporter-like_CS"/>
</dbReference>
<dbReference type="InterPro" id="IPR015856">
    <property type="entry name" value="ABC_transpr_CbiO/EcfA_su"/>
</dbReference>
<dbReference type="InterPro" id="IPR050095">
    <property type="entry name" value="ECF_ABC_transporter_ATP-bd"/>
</dbReference>
<dbReference type="InterPro" id="IPR027417">
    <property type="entry name" value="P-loop_NTPase"/>
</dbReference>
<dbReference type="NCBIfam" id="NF010167">
    <property type="entry name" value="PRK13648.1"/>
    <property type="match status" value="2"/>
</dbReference>
<dbReference type="PANTHER" id="PTHR43553:SF26">
    <property type="entry name" value="ABC TRANSPORTER ATP-BINDING PROTEIN BC_2655-RELATED"/>
    <property type="match status" value="1"/>
</dbReference>
<dbReference type="PANTHER" id="PTHR43553">
    <property type="entry name" value="HEAVY METAL TRANSPORTER"/>
    <property type="match status" value="1"/>
</dbReference>
<dbReference type="Pfam" id="PF00005">
    <property type="entry name" value="ABC_tran"/>
    <property type="match status" value="2"/>
</dbReference>
<dbReference type="Pfam" id="PF12558">
    <property type="entry name" value="DUF3744"/>
    <property type="match status" value="1"/>
</dbReference>
<dbReference type="SMART" id="SM00382">
    <property type="entry name" value="AAA"/>
    <property type="match status" value="2"/>
</dbReference>
<dbReference type="SUPFAM" id="SSF52540">
    <property type="entry name" value="P-loop containing nucleoside triphosphate hydrolases"/>
    <property type="match status" value="2"/>
</dbReference>
<dbReference type="PROSITE" id="PS00211">
    <property type="entry name" value="ABC_TRANSPORTER_1"/>
    <property type="match status" value="2"/>
</dbReference>
<dbReference type="PROSITE" id="PS50893">
    <property type="entry name" value="ABC_TRANSPORTER_2"/>
    <property type="match status" value="2"/>
</dbReference>
<proteinExistence type="inferred from homology"/>
<gene>
    <name type="ordered locus">SAS2569</name>
</gene>
<keyword id="KW-0067">ATP-binding</keyword>
<keyword id="KW-1003">Cell membrane</keyword>
<keyword id="KW-0472">Membrane</keyword>
<keyword id="KW-0547">Nucleotide-binding</keyword>
<keyword id="KW-0677">Repeat</keyword>
<keyword id="KW-1278">Translocase</keyword>
<keyword id="KW-0813">Transport</keyword>
<evidence type="ECO:0000250" key="1"/>
<evidence type="ECO:0000255" key="2">
    <source>
        <dbReference type="PROSITE-ProRule" id="PRU00434"/>
    </source>
</evidence>
<evidence type="ECO:0000305" key="3"/>
<protein>
    <recommendedName>
        <fullName>Putative ABC transporter ATP-binding protein SAS2569</fullName>
        <ecNumber>7.-.-.-</ecNumber>
    </recommendedName>
</protein>
<accession>Q6G5Z1</accession>
<comment type="function">
    <text evidence="1">Probably part of an ABC transporter complex. Responsible for energy coupling to the transport system (By similarity).</text>
</comment>
<comment type="subcellular location">
    <subcellularLocation>
        <location evidence="1">Cell membrane</location>
        <topology evidence="1">Peripheral membrane protein</topology>
    </subcellularLocation>
</comment>
<comment type="similarity">
    <text evidence="3">Belongs to the ABC transporter superfamily.</text>
</comment>
<reference key="1">
    <citation type="journal article" date="2004" name="Proc. Natl. Acad. Sci. U.S.A.">
        <title>Complete genomes of two clinical Staphylococcus aureus strains: evidence for the rapid evolution of virulence and drug resistance.</title>
        <authorList>
            <person name="Holden M.T.G."/>
            <person name="Feil E.J."/>
            <person name="Lindsay J.A."/>
            <person name="Peacock S.J."/>
            <person name="Day N.P.J."/>
            <person name="Enright M.C."/>
            <person name="Foster T.J."/>
            <person name="Moore C.E."/>
            <person name="Hurst L."/>
            <person name="Atkin R."/>
            <person name="Barron A."/>
            <person name="Bason N."/>
            <person name="Bentley S.D."/>
            <person name="Chillingworth C."/>
            <person name="Chillingworth T."/>
            <person name="Churcher C."/>
            <person name="Clark L."/>
            <person name="Corton C."/>
            <person name="Cronin A."/>
            <person name="Doggett J."/>
            <person name="Dowd L."/>
            <person name="Feltwell T."/>
            <person name="Hance Z."/>
            <person name="Harris B."/>
            <person name="Hauser H."/>
            <person name="Holroyd S."/>
            <person name="Jagels K."/>
            <person name="James K.D."/>
            <person name="Lennard N."/>
            <person name="Line A."/>
            <person name="Mayes R."/>
            <person name="Moule S."/>
            <person name="Mungall K."/>
            <person name="Ormond D."/>
            <person name="Quail M.A."/>
            <person name="Rabbinowitsch E."/>
            <person name="Rutherford K.M."/>
            <person name="Sanders M."/>
            <person name="Sharp S."/>
            <person name="Simmonds M."/>
            <person name="Stevens K."/>
            <person name="Whitehead S."/>
            <person name="Barrell B.G."/>
            <person name="Spratt B.G."/>
            <person name="Parkhill J."/>
        </authorList>
    </citation>
    <scope>NUCLEOTIDE SEQUENCE [LARGE SCALE GENOMIC DNA]</scope>
    <source>
        <strain>MSSA476</strain>
    </source>
</reference>
<organism>
    <name type="scientific">Staphylococcus aureus (strain MSSA476)</name>
    <dbReference type="NCBI Taxonomy" id="282459"/>
    <lineage>
        <taxon>Bacteria</taxon>
        <taxon>Bacillati</taxon>
        <taxon>Bacillota</taxon>
        <taxon>Bacilli</taxon>
        <taxon>Bacillales</taxon>
        <taxon>Staphylococcaceae</taxon>
        <taxon>Staphylococcus</taxon>
    </lineage>
</organism>
<feature type="chain" id="PRO_0000092076" description="Putative ABC transporter ATP-binding protein SAS2569">
    <location>
        <begin position="1"/>
        <end position="570"/>
    </location>
</feature>
<feature type="domain" description="ABC transporter 1" evidence="2">
    <location>
        <begin position="6"/>
        <end position="247"/>
    </location>
</feature>
<feature type="domain" description="ABC transporter 2" evidence="2">
    <location>
        <begin position="304"/>
        <end position="537"/>
    </location>
</feature>
<feature type="binding site" evidence="2">
    <location>
        <begin position="40"/>
        <end position="47"/>
    </location>
    <ligand>
        <name>ATP</name>
        <dbReference type="ChEBI" id="CHEBI:30616"/>
        <label>1</label>
    </ligand>
</feature>
<feature type="binding site" evidence="2">
    <location>
        <begin position="338"/>
        <end position="345"/>
    </location>
    <ligand>
        <name>ATP</name>
        <dbReference type="ChEBI" id="CHEBI:30616"/>
        <label>2</label>
    </ligand>
</feature>